<proteinExistence type="inferred from homology"/>
<sequence>MSIVIGADAAGLRLKEVVKDFLEKENFHLVDVTAEGQDFVDVTLAVAAEVNKEEQNLGIVIDAYGAGPFMVATKIKGMVAAEVSDERSAYMTRGHNNSRMITMGAQLVGDELAKNIAKGFVNGKYDGGRHQIRVDMLNKMG</sequence>
<evidence type="ECO:0000255" key="1">
    <source>
        <dbReference type="HAMAP-Rule" id="MF_01555"/>
    </source>
</evidence>
<dbReference type="EC" id="5.3.1.26" evidence="1"/>
<dbReference type="EMBL" id="CP001033">
    <property type="protein sequence ID" value="ACB90357.1"/>
    <property type="molecule type" value="Genomic_DNA"/>
</dbReference>
<dbReference type="RefSeq" id="WP_000029272.1">
    <property type="nucleotide sequence ID" value="NC_010582.1"/>
</dbReference>
<dbReference type="SMR" id="B2IPT5"/>
<dbReference type="GeneID" id="45653585"/>
<dbReference type="KEGG" id="spw:SPCG_1105"/>
<dbReference type="HOGENOM" id="CLU_091396_4_2_9"/>
<dbReference type="UniPathway" id="UPA00702">
    <property type="reaction ID" value="UER00714"/>
</dbReference>
<dbReference type="GO" id="GO:0050044">
    <property type="term" value="F:galactose-6-phosphate isomerase activity"/>
    <property type="evidence" value="ECO:0007669"/>
    <property type="project" value="UniProtKB-UniRule"/>
</dbReference>
<dbReference type="GO" id="GO:0004751">
    <property type="term" value="F:ribose-5-phosphate isomerase activity"/>
    <property type="evidence" value="ECO:0007669"/>
    <property type="project" value="TreeGrafter"/>
</dbReference>
<dbReference type="GO" id="GO:0019316">
    <property type="term" value="P:D-allose catabolic process"/>
    <property type="evidence" value="ECO:0007669"/>
    <property type="project" value="TreeGrafter"/>
</dbReference>
<dbReference type="GO" id="GO:0019388">
    <property type="term" value="P:galactose catabolic process"/>
    <property type="evidence" value="ECO:0007669"/>
    <property type="project" value="UniProtKB-UniPathway"/>
</dbReference>
<dbReference type="GO" id="GO:0019512">
    <property type="term" value="P:lactose catabolic process via tagatose-6-phosphate"/>
    <property type="evidence" value="ECO:0007669"/>
    <property type="project" value="UniProtKB-UniRule"/>
</dbReference>
<dbReference type="GO" id="GO:0009052">
    <property type="term" value="P:pentose-phosphate shunt, non-oxidative branch"/>
    <property type="evidence" value="ECO:0007669"/>
    <property type="project" value="TreeGrafter"/>
</dbReference>
<dbReference type="Gene3D" id="3.40.1400.10">
    <property type="entry name" value="Sugar-phosphate isomerase, RpiB/LacA/LacB"/>
    <property type="match status" value="1"/>
</dbReference>
<dbReference type="HAMAP" id="MF_01555">
    <property type="entry name" value="LacA"/>
    <property type="match status" value="1"/>
</dbReference>
<dbReference type="InterPro" id="IPR004783">
    <property type="entry name" value="LacA"/>
</dbReference>
<dbReference type="InterPro" id="IPR003500">
    <property type="entry name" value="RpiB_LacA_LacB"/>
</dbReference>
<dbReference type="InterPro" id="IPR036569">
    <property type="entry name" value="RpiB_LacA_LacB_sf"/>
</dbReference>
<dbReference type="NCBIfam" id="TIGR01118">
    <property type="entry name" value="lacA"/>
    <property type="match status" value="1"/>
</dbReference>
<dbReference type="NCBIfam" id="NF006380">
    <property type="entry name" value="PRK08621.1"/>
    <property type="match status" value="1"/>
</dbReference>
<dbReference type="NCBIfam" id="NF009257">
    <property type="entry name" value="PRK12613.1"/>
    <property type="match status" value="1"/>
</dbReference>
<dbReference type="NCBIfam" id="TIGR00689">
    <property type="entry name" value="rpiB_lacA_lacB"/>
    <property type="match status" value="1"/>
</dbReference>
<dbReference type="PANTHER" id="PTHR30345:SF5">
    <property type="entry name" value="GALACTOSE-6-PHOSPHATE ISOMERASE SUBUNIT LACA"/>
    <property type="match status" value="1"/>
</dbReference>
<dbReference type="PANTHER" id="PTHR30345">
    <property type="entry name" value="RIBOSE-5-PHOSPHATE ISOMERASE B"/>
    <property type="match status" value="1"/>
</dbReference>
<dbReference type="Pfam" id="PF02502">
    <property type="entry name" value="LacAB_rpiB"/>
    <property type="match status" value="1"/>
</dbReference>
<dbReference type="PIRSF" id="PIRSF005384">
    <property type="entry name" value="RpiB_LacA_B"/>
    <property type="match status" value="1"/>
</dbReference>
<dbReference type="SUPFAM" id="SSF89623">
    <property type="entry name" value="Ribose/Galactose isomerase RpiB/AlsB"/>
    <property type="match status" value="1"/>
</dbReference>
<accession>B2IPT5</accession>
<feature type="chain" id="PRO_1000147084" description="Galactose-6-phosphate isomerase subunit LacA">
    <location>
        <begin position="1"/>
        <end position="141"/>
    </location>
</feature>
<organism>
    <name type="scientific">Streptococcus pneumoniae (strain CGSP14)</name>
    <dbReference type="NCBI Taxonomy" id="516950"/>
    <lineage>
        <taxon>Bacteria</taxon>
        <taxon>Bacillati</taxon>
        <taxon>Bacillota</taxon>
        <taxon>Bacilli</taxon>
        <taxon>Lactobacillales</taxon>
        <taxon>Streptococcaceae</taxon>
        <taxon>Streptococcus</taxon>
    </lineage>
</organism>
<protein>
    <recommendedName>
        <fullName evidence="1">Galactose-6-phosphate isomerase subunit LacA</fullName>
        <ecNumber evidence="1">5.3.1.26</ecNumber>
    </recommendedName>
</protein>
<gene>
    <name evidence="1" type="primary">lacA</name>
    <name type="ordered locus">SPCG_1105</name>
</gene>
<reference key="1">
    <citation type="journal article" date="2009" name="BMC Genomics">
        <title>Genome evolution driven by host adaptations results in a more virulent and antimicrobial-resistant Streptococcus pneumoniae serotype 14.</title>
        <authorList>
            <person name="Ding F."/>
            <person name="Tang P."/>
            <person name="Hsu M.-H."/>
            <person name="Cui P."/>
            <person name="Hu S."/>
            <person name="Yu J."/>
            <person name="Chiu C.-H."/>
        </authorList>
    </citation>
    <scope>NUCLEOTIDE SEQUENCE [LARGE SCALE GENOMIC DNA]</scope>
    <source>
        <strain>CGSP14</strain>
    </source>
</reference>
<comment type="catalytic activity">
    <reaction evidence="1">
        <text>aldehydo-D-galactose 6-phosphate = keto-D-tagatose 6-phosphate</text>
        <dbReference type="Rhea" id="RHEA:13033"/>
        <dbReference type="ChEBI" id="CHEBI:58255"/>
        <dbReference type="ChEBI" id="CHEBI:134283"/>
        <dbReference type="EC" id="5.3.1.26"/>
    </reaction>
</comment>
<comment type="pathway">
    <text evidence="1">Carbohydrate metabolism; D-galactose 6-phosphate degradation; D-tagatose 6-phosphate from D-galactose 6-phosphate: step 1/1.</text>
</comment>
<comment type="subunit">
    <text evidence="1">Heteromultimeric protein consisting of LacA and LacB.</text>
</comment>
<comment type="similarity">
    <text evidence="1">Belongs to the LacAB/RpiB family.</text>
</comment>
<name>LACA_STRPS</name>
<keyword id="KW-0413">Isomerase</keyword>
<keyword id="KW-0423">Lactose metabolism</keyword>